<gene>
    <name type="primary">SH2B2</name>
    <name type="synonym">APS</name>
</gene>
<sequence length="632" mass="67738">MNGAGPGPAAAAPVPVPVPVPDWRQFCELHAQAAAVDFAHKFCRFLRDNPAYDTPDAGASFSRHFAANFLDVFGEEVRRVLVAGPTTRGAAVSAEAMEPELADTSALKAAPYGHSRSSEDVSTHAATKARVRKGFSLRNMSLCVVDGVRDMWHRRASPEPDAAAAPRTAEPRDKWTRRLRLSRTLAAKVELVDIQREGALRFMVADDAAAGSGGSAQWQKCRLLLRRAVAEERFRLEFFVPPKASRPKVSIPLSAIIEVRTTMPLEMPEKDNTFVLKVENGAEYILETIDSLQKHSWVADIQGCVDPGDSEEDTELSCTRGGCLASRVASCSCELLTDAVDLPRPPETTAVGAVVTAPHSRGRDAVRESLIHVPLETFLQTLESPGGSGSDSNNTGEQGAETDPEAEPELELSDYPWFHGTLSRVKAAQLVLAGGPRNHGLFVIRQSETRPGEYVLTFNFQGKAKHLRLSLNGHGQCHVQHLWFQSVLDMLRHFHTHPIPLESGGSADITLRSYVRAQDPPPEPGPTPPAAPASPACWSDSPGQHYFSSLAAAACPPASPSDAAGASSSSASSSSAASGPAPPRPVEGQLSARSRSNSAERLLEAVAATAAEEPPEAAPGRARAVENQYSFY</sequence>
<proteinExistence type="evidence at protein level"/>
<protein>
    <recommendedName>
        <fullName>SH2B adapter protein 2</fullName>
    </recommendedName>
    <alternativeName>
        <fullName>Adapter protein with pleckstrin homology and Src homology 2 domains</fullName>
    </alternativeName>
    <alternativeName>
        <fullName>SH2 and PH domain-containing adapter protein APS</fullName>
    </alternativeName>
</protein>
<comment type="function">
    <text evidence="6 7 8 10">Adapter protein for several members of the tyrosine kinase receptor family. Involved in multiple signaling pathways. May be involved in coupling from immunoreceptor to Ras signaling. Acts as a negative regulator of cytokine signaling in collaboration with CBL. Binds to EPOR and suppresses EPO-induced STAT5 activation, possibly through a masking effect on STAT5 docking sites in EPOR. Suppresses PDGF-induced mitogenesis. May induce cytoskeletal reorganization via interaction with VAV3.</text>
</comment>
<comment type="subunit">
    <text evidence="1">Homodimer. Interacts with KIT/c-KIT, SHC1, EPOR, PDGFR, VAV1 and VAV3. Interacts (via N-terminal region) with SHC1. Interacts (via the phosphorylated C-terminus) with GRB2. Interacts (via its SH2 domain) with EPOR, INSR and KIT. Interacts with GRB2 after B-cell antigen receptor stimulation. Interacts (via PH domain) with VAV3. Interacts with NTRK1, NTRK2 and NTRK3 (phosphorylated); after stimulation of the receptor by its extracellular ligand and subsequent autophosphorylation of the receptor. Binds INSR, GRB2, ASB6 and CAP. Insulin stimulation leads to dissociation of CAP. Binds CBS only when SH2B2/APS has become phosphorylated. INSR binding does not depend on the phosphorylation of SH2B2/APS (By similarity).</text>
</comment>
<comment type="interaction">
    <interactant intactId="EBI-7507432">
        <id>O14492</id>
    </interactant>
    <interactant intactId="EBI-518228">
        <id>P22681</id>
        <label>CBL</label>
    </interactant>
    <organismsDiffer>false</organismsDiffer>
    <experiments>7</experiments>
</comment>
<comment type="interaction">
    <interactant intactId="EBI-19952306">
        <id>O14492-2</id>
    </interactant>
    <interactant intactId="EBI-6425205">
        <id>Q9NWX5</id>
        <label>ASB6</label>
    </interactant>
    <organismsDiffer>false</organismsDiffer>
    <experiments>6</experiments>
</comment>
<comment type="interaction">
    <interactant intactId="EBI-19952306">
        <id>O14492-2</id>
    </interactant>
    <interactant intactId="EBI-11981867">
        <id>P49759-3</id>
        <label>CLK1</label>
    </interactant>
    <organismsDiffer>false</organismsDiffer>
    <experiments>3</experiments>
</comment>
<comment type="interaction">
    <interactant intactId="EBI-19952306">
        <id>O14492-2</id>
    </interactant>
    <interactant intactId="EBI-745579">
        <id>P49761</id>
        <label>CLK3</label>
    </interactant>
    <organismsDiffer>false</organismsDiffer>
    <experiments>3</experiments>
</comment>
<comment type="interaction">
    <interactant intactId="EBI-19952306">
        <id>O14492-2</id>
    </interactant>
    <interactant intactId="EBI-749800">
        <id>Q9UII6</id>
        <label>DUSP13B</label>
    </interactant>
    <organismsDiffer>false</organismsDiffer>
    <experiments>3</experiments>
</comment>
<comment type="interaction">
    <interactant intactId="EBI-19952306">
        <id>O14492-2</id>
    </interactant>
    <interactant intactId="EBI-11986315">
        <id>Q9H5Z6-2</id>
        <label>FAM124B</label>
    </interactant>
    <organismsDiffer>false</organismsDiffer>
    <experiments>3</experiments>
</comment>
<comment type="interaction">
    <interactant intactId="EBI-19952306">
        <id>O14492-2</id>
    </interactant>
    <interactant intactId="EBI-6658203">
        <id>Q86YD7</id>
        <label>FAM90A1</label>
    </interactant>
    <organismsDiffer>false</organismsDiffer>
    <experiments>3</experiments>
</comment>
<comment type="interaction">
    <interactant intactId="EBI-19952306">
        <id>O14492-2</id>
    </interactant>
    <interactant intactId="EBI-9834454">
        <id>P08631-2</id>
        <label>HCK</label>
    </interactant>
    <organismsDiffer>false</organismsDiffer>
    <experiments>3</experiments>
</comment>
<comment type="interaction">
    <interactant intactId="EBI-19952306">
        <id>O14492-2</id>
    </interactant>
    <interactant intactId="EBI-465156">
        <id>Q9UBH0</id>
        <label>IL36RN</label>
    </interactant>
    <organismsDiffer>false</organismsDiffer>
    <experiments>3</experiments>
</comment>
<comment type="interaction">
    <interactant intactId="EBI-19952306">
        <id>O14492-2</id>
    </interactant>
    <interactant intactId="EBI-11742507">
        <id>Q8TAP4-4</id>
        <label>LMO3</label>
    </interactant>
    <organismsDiffer>false</organismsDiffer>
    <experiments>3</experiments>
</comment>
<comment type="interaction">
    <interactant intactId="EBI-19952306">
        <id>O14492-2</id>
    </interactant>
    <interactant intactId="EBI-473834">
        <id>Q9H213</id>
        <label>MAGEH1</label>
    </interactant>
    <organismsDiffer>false</organismsDiffer>
    <experiments>3</experiments>
</comment>
<comment type="interaction">
    <interactant intactId="EBI-19952306">
        <id>O14492-2</id>
    </interactant>
    <interactant intactId="EBI-348259">
        <id>Q96EZ8</id>
        <label>MCRS1</label>
    </interactant>
    <organismsDiffer>false</organismsDiffer>
    <experiments>3</experiments>
</comment>
<comment type="interaction">
    <interactant intactId="EBI-19952306">
        <id>O14492-2</id>
    </interactant>
    <interactant intactId="EBI-11079894">
        <id>Q9HB20</id>
        <label>PLEKHA3</label>
    </interactant>
    <organismsDiffer>false</organismsDiffer>
    <experiments>3</experiments>
</comment>
<comment type="interaction">
    <interactant intactId="EBI-19952306">
        <id>O14492-2</id>
    </interactant>
    <interactant intactId="EBI-1760079">
        <id>Q9NRW1</id>
        <label>RAB6B</label>
    </interactant>
    <organismsDiffer>false</organismsDiffer>
    <experiments>3</experiments>
</comment>
<comment type="interaction">
    <interactant intactId="EBI-19952306">
        <id>O14492-2</id>
    </interactant>
    <interactant intactId="EBI-11741437">
        <id>Q08117-2</id>
        <label>TLE5</label>
    </interactant>
    <organismsDiffer>false</organismsDiffer>
    <experiments>3</experiments>
</comment>
<comment type="interaction">
    <interactant intactId="EBI-19952306">
        <id>O14492-2</id>
    </interactant>
    <interactant intactId="EBI-12344941">
        <id>Q9H1K6</id>
        <label>TLNRD1</label>
    </interactant>
    <organismsDiffer>false</organismsDiffer>
    <experiments>3</experiments>
</comment>
<comment type="interaction">
    <interactant intactId="EBI-19952306">
        <id>O14492-2</id>
    </interactant>
    <interactant intactId="EBI-743272">
        <id>O75604</id>
        <label>USP2</label>
    </interactant>
    <organismsDiffer>false</organismsDiffer>
    <experiments>3</experiments>
</comment>
<comment type="interaction">
    <interactant intactId="EBI-19952306">
        <id>O14492-2</id>
    </interactant>
    <interactant intactId="EBI-744257">
        <id>Q96IQ9</id>
        <label>ZNF414</label>
    </interactant>
    <organismsDiffer>false</organismsDiffer>
    <experiments>3</experiments>
</comment>
<comment type="interaction">
    <interactant intactId="EBI-19952306">
        <id>O14492-2</id>
    </interactant>
    <interactant intactId="EBI-740727">
        <id>Q8TAU3</id>
        <label>ZNF417</label>
    </interactant>
    <organismsDiffer>false</organismsDiffer>
    <experiments>3</experiments>
</comment>
<comment type="subcellular location">
    <subcellularLocation>
        <location evidence="10">Cytoplasm</location>
    </subcellularLocation>
    <subcellularLocation>
        <location evidence="10">Cell membrane</location>
    </subcellularLocation>
    <text>Cytoplasmic before PDGF stimulation. After PDGF stimulation, localized at the cell membrane and peripheral region.</text>
</comment>
<comment type="alternative products">
    <event type="alternative splicing"/>
    <isoform>
        <id>O14492-1</id>
        <name>1</name>
        <sequence type="displayed"/>
    </isoform>
    <isoform>
        <id>O14492-2</id>
        <name>2</name>
        <sequence type="described" ref="VSP_059358"/>
    </isoform>
</comment>
<comment type="tissue specificity">
    <text evidence="9 10">Expressed in spleen, prostate, testis, uterus, small intestine and skeletal muscle. Among hematopoietic cell lines, expressed exclusively in B-cells. Not expressed in most tumor cell lines.</text>
</comment>
<comment type="PTM">
    <text evidence="2 6 9 10">Tyrosine phosphorylated by JAK2, KIT and other kinases activated by B-cell receptor in response to stimulation with cytokines, IL3, IL5, PDGF, IGF1, IGF2, CSF2/GM-CSF and cross-linking of the B-cell receptor complex.</text>
</comment>
<comment type="similarity">
    <text evidence="11">Belongs to the SH2B adapter family.</text>
</comment>
<evidence type="ECO:0000250" key="1"/>
<evidence type="ECO:0000250" key="2">
    <source>
        <dbReference type="UniProtKB" id="Q9JID9"/>
    </source>
</evidence>
<evidence type="ECO:0000255" key="3">
    <source>
        <dbReference type="PROSITE-ProRule" id="PRU00145"/>
    </source>
</evidence>
<evidence type="ECO:0000255" key="4">
    <source>
        <dbReference type="PROSITE-ProRule" id="PRU00191"/>
    </source>
</evidence>
<evidence type="ECO:0000256" key="5">
    <source>
        <dbReference type="SAM" id="MobiDB-lite"/>
    </source>
</evidence>
<evidence type="ECO:0000269" key="6">
    <source>
    </source>
</evidence>
<evidence type="ECO:0000269" key="7">
    <source>
    </source>
</evidence>
<evidence type="ECO:0000269" key="8">
    <source>
    </source>
</evidence>
<evidence type="ECO:0000269" key="9">
    <source>
    </source>
</evidence>
<evidence type="ECO:0000269" key="10">
    <source>
    </source>
</evidence>
<evidence type="ECO:0000305" key="11"/>
<evidence type="ECO:0000312" key="12">
    <source>
        <dbReference type="EMBL" id="BAA22514.1"/>
    </source>
</evidence>
<evidence type="ECO:0007829" key="13">
    <source>
        <dbReference type="PDB" id="1Q2H"/>
    </source>
</evidence>
<dbReference type="EMBL" id="AB000520">
    <property type="protein sequence ID" value="BAA22514.1"/>
    <property type="molecule type" value="mRNA"/>
</dbReference>
<dbReference type="EMBL" id="AC005088">
    <property type="status" value="NOT_ANNOTATED_CDS"/>
    <property type="molecule type" value="Genomic_DNA"/>
</dbReference>
<dbReference type="EMBL" id="AC091390">
    <property type="status" value="NOT_ANNOTATED_CDS"/>
    <property type="molecule type" value="Genomic_DNA"/>
</dbReference>
<dbReference type="EMBL" id="CH471197">
    <property type="protein sequence ID" value="EAW50232.1"/>
    <property type="molecule type" value="Genomic_DNA"/>
</dbReference>
<dbReference type="CCDS" id="CCDS78264.2">
    <molecule id="O14492-1"/>
</dbReference>
<dbReference type="RefSeq" id="NP_001346157.1">
    <molecule id="O14492-1"/>
    <property type="nucleotide sequence ID" value="NM_001359228.2"/>
</dbReference>
<dbReference type="RefSeq" id="NP_001346158.1">
    <molecule id="O14492-1"/>
    <property type="nucleotide sequence ID" value="NM_001359229.2"/>
</dbReference>
<dbReference type="RefSeq" id="NP_001380920.2">
    <molecule id="O14492-1"/>
    <property type="nucleotide sequence ID" value="NM_001393991.3"/>
</dbReference>
<dbReference type="RefSeq" id="NP_001380922.1">
    <molecule id="O14492-1"/>
    <property type="nucleotide sequence ID" value="NM_001393993.1"/>
</dbReference>
<dbReference type="RefSeq" id="NP_001380923.1">
    <molecule id="O14492-1"/>
    <property type="nucleotide sequence ID" value="NM_001393994.1"/>
</dbReference>
<dbReference type="RefSeq" id="NP_001381355.1">
    <molecule id="O14492-1"/>
    <property type="nucleotide sequence ID" value="NM_001394426.1"/>
</dbReference>
<dbReference type="RefSeq" id="NP_066189.3">
    <property type="nucleotide sequence ID" value="NM_020979.4"/>
</dbReference>
<dbReference type="RefSeq" id="XP_005277034.1">
    <property type="nucleotide sequence ID" value="XM_005276977.4"/>
</dbReference>
<dbReference type="RefSeq" id="XP_005277036.1">
    <property type="nucleotide sequence ID" value="XM_005276979.3"/>
</dbReference>
<dbReference type="PDB" id="1Q2H">
    <property type="method" value="X-ray"/>
    <property type="resolution" value="1.70 A"/>
    <property type="chains" value="A/B/C=21-85"/>
</dbReference>
<dbReference type="PDBsum" id="1Q2H"/>
<dbReference type="SMR" id="O14492"/>
<dbReference type="BioGRID" id="115850">
    <property type="interactions" value="45"/>
</dbReference>
<dbReference type="FunCoup" id="O14492">
    <property type="interactions" value="950"/>
</dbReference>
<dbReference type="IntAct" id="O14492">
    <property type="interactions" value="26"/>
</dbReference>
<dbReference type="MINT" id="O14492"/>
<dbReference type="STRING" id="9606.ENSP00000440273"/>
<dbReference type="BindingDB" id="O14492"/>
<dbReference type="GlyGen" id="O14492">
    <property type="glycosylation" value="1 site"/>
</dbReference>
<dbReference type="iPTMnet" id="O14492"/>
<dbReference type="PhosphoSitePlus" id="O14492"/>
<dbReference type="BioMuta" id="SH2B2"/>
<dbReference type="jPOST" id="O14492"/>
<dbReference type="MassIVE" id="O14492"/>
<dbReference type="PaxDb" id="9606-ENSP00000440273"/>
<dbReference type="PeptideAtlas" id="O14492"/>
<dbReference type="ProteomicsDB" id="48035"/>
<dbReference type="DNASU" id="10603"/>
<dbReference type="Ensembl" id="ENST00000444095.3">
    <molecule id="O14492-1"/>
    <property type="protein sequence ID" value="ENSP00000401883.3"/>
    <property type="gene ID" value="ENSG00000160999.11"/>
</dbReference>
<dbReference type="Ensembl" id="ENST00000536178.3">
    <molecule id="O14492-1"/>
    <property type="protein sequence ID" value="ENSP00000440273.4"/>
    <property type="gene ID" value="ENSG00000160999.11"/>
</dbReference>
<dbReference type="GeneID" id="10603"/>
<dbReference type="MANE-Select" id="ENST00000444095.3">
    <property type="protein sequence ID" value="ENSP00000401883.3"/>
    <property type="RefSeq nucleotide sequence ID" value="NM_001359228.2"/>
    <property type="RefSeq protein sequence ID" value="NP_001346157.1"/>
</dbReference>
<dbReference type="UCSC" id="uc033aba.2">
    <property type="organism name" value="human"/>
</dbReference>
<dbReference type="AGR" id="HGNC:17381"/>
<dbReference type="CTD" id="10603"/>
<dbReference type="DisGeNET" id="10603"/>
<dbReference type="GeneCards" id="SH2B2"/>
<dbReference type="HGNC" id="HGNC:17381">
    <property type="gene designation" value="SH2B2"/>
</dbReference>
<dbReference type="HPA" id="ENSG00000160999">
    <property type="expression patterns" value="Tissue enhanced (skeletal)"/>
</dbReference>
<dbReference type="MIM" id="605300">
    <property type="type" value="gene"/>
</dbReference>
<dbReference type="neXtProt" id="NX_O14492"/>
<dbReference type="OpenTargets" id="ENSG00000160999"/>
<dbReference type="PharmGKB" id="PA145148106"/>
<dbReference type="eggNOG" id="ENOG502QT43">
    <property type="taxonomic scope" value="Eukaryota"/>
</dbReference>
<dbReference type="GeneTree" id="ENSGT00950000183191"/>
<dbReference type="InParanoid" id="O14492"/>
<dbReference type="OMA" id="TQKWEKS"/>
<dbReference type="OrthoDB" id="10047184at2759"/>
<dbReference type="PAN-GO" id="O14492">
    <property type="GO annotations" value="4 GO annotations based on evolutionary models"/>
</dbReference>
<dbReference type="PhylomeDB" id="O14492"/>
<dbReference type="PathwayCommons" id="O14492"/>
<dbReference type="Reactome" id="R-HSA-1433559">
    <property type="pathway name" value="Regulation of KIT signaling"/>
</dbReference>
<dbReference type="Reactome" id="R-HSA-983231">
    <property type="pathway name" value="Factors involved in megakaryocyte development and platelet production"/>
</dbReference>
<dbReference type="SignaLink" id="O14492"/>
<dbReference type="SIGNOR" id="O14492"/>
<dbReference type="BioGRID-ORCS" id="10603">
    <property type="hits" value="11 hits in 327 CRISPR screens"/>
</dbReference>
<dbReference type="ChiTaRS" id="SH2B2">
    <property type="organism name" value="human"/>
</dbReference>
<dbReference type="EvolutionaryTrace" id="O14492"/>
<dbReference type="GeneWiki" id="SH2B2"/>
<dbReference type="GenomeRNAi" id="10603"/>
<dbReference type="Pharos" id="O14492">
    <property type="development level" value="Tbio"/>
</dbReference>
<dbReference type="PRO" id="PR:O14492"/>
<dbReference type="Proteomes" id="UP000005640">
    <property type="component" value="Chromosome 7"/>
</dbReference>
<dbReference type="RNAct" id="O14492">
    <property type="molecule type" value="protein"/>
</dbReference>
<dbReference type="Bgee" id="ENSG00000160999">
    <property type="expression patterns" value="Expressed in triceps brachii and 196 other cell types or tissues"/>
</dbReference>
<dbReference type="ExpressionAtlas" id="O14492">
    <property type="expression patterns" value="baseline and differential"/>
</dbReference>
<dbReference type="GO" id="GO:0005884">
    <property type="term" value="C:actin filament"/>
    <property type="evidence" value="ECO:0007669"/>
    <property type="project" value="Ensembl"/>
</dbReference>
<dbReference type="GO" id="GO:0005737">
    <property type="term" value="C:cytoplasm"/>
    <property type="evidence" value="ECO:0000314"/>
    <property type="project" value="UniProtKB"/>
</dbReference>
<dbReference type="GO" id="GO:0005829">
    <property type="term" value="C:cytosol"/>
    <property type="evidence" value="ECO:0000314"/>
    <property type="project" value="HPA"/>
</dbReference>
<dbReference type="GO" id="GO:0005886">
    <property type="term" value="C:plasma membrane"/>
    <property type="evidence" value="ECO:0000314"/>
    <property type="project" value="UniProtKB"/>
</dbReference>
<dbReference type="GO" id="GO:0001726">
    <property type="term" value="C:ruffle"/>
    <property type="evidence" value="ECO:0007669"/>
    <property type="project" value="Ensembl"/>
</dbReference>
<dbReference type="GO" id="GO:0001725">
    <property type="term" value="C:stress fiber"/>
    <property type="evidence" value="ECO:0007669"/>
    <property type="project" value="Ensembl"/>
</dbReference>
<dbReference type="GO" id="GO:0042169">
    <property type="term" value="F:SH2 domain binding"/>
    <property type="evidence" value="ECO:0000314"/>
    <property type="project" value="UniProtKB"/>
</dbReference>
<dbReference type="GO" id="GO:0035591">
    <property type="term" value="F:signaling adaptor activity"/>
    <property type="evidence" value="ECO:0000314"/>
    <property type="project" value="UniProtKB"/>
</dbReference>
<dbReference type="GO" id="GO:0005068">
    <property type="term" value="F:transmembrane receptor protein tyrosine kinase adaptor activity"/>
    <property type="evidence" value="ECO:0000318"/>
    <property type="project" value="GO_Central"/>
</dbReference>
<dbReference type="GO" id="GO:0030036">
    <property type="term" value="P:actin cytoskeleton organization"/>
    <property type="evidence" value="ECO:0007669"/>
    <property type="project" value="Ensembl"/>
</dbReference>
<dbReference type="GO" id="GO:0050851">
    <property type="term" value="P:antigen receptor-mediated signaling pathway"/>
    <property type="evidence" value="ECO:0000318"/>
    <property type="project" value="GO_Central"/>
</dbReference>
<dbReference type="GO" id="GO:0050853">
    <property type="term" value="P:B cell receptor signaling pathway"/>
    <property type="evidence" value="ECO:0000314"/>
    <property type="project" value="UniProtKB"/>
</dbReference>
<dbReference type="GO" id="GO:0001922">
    <property type="term" value="P:B-1 B cell homeostasis"/>
    <property type="evidence" value="ECO:0007669"/>
    <property type="project" value="Ensembl"/>
</dbReference>
<dbReference type="GO" id="GO:0050873">
    <property type="term" value="P:brown fat cell differentiation"/>
    <property type="evidence" value="ECO:0007669"/>
    <property type="project" value="Ensembl"/>
</dbReference>
<dbReference type="GO" id="GO:0019221">
    <property type="term" value="P:cytokine-mediated signaling pathway"/>
    <property type="evidence" value="ECO:0007669"/>
    <property type="project" value="Ensembl"/>
</dbReference>
<dbReference type="GO" id="GO:0008286">
    <property type="term" value="P:insulin receptor signaling pathway"/>
    <property type="evidence" value="ECO:0000250"/>
    <property type="project" value="BHF-UCL"/>
</dbReference>
<dbReference type="GO" id="GO:0035556">
    <property type="term" value="P:intracellular signal transduction"/>
    <property type="evidence" value="ECO:0000318"/>
    <property type="project" value="GO_Central"/>
</dbReference>
<dbReference type="GO" id="GO:0019222">
    <property type="term" value="P:regulation of metabolic process"/>
    <property type="evidence" value="ECO:0007669"/>
    <property type="project" value="Ensembl"/>
</dbReference>
<dbReference type="CDD" id="cd01231">
    <property type="entry name" value="PH_SH2B_family"/>
    <property type="match status" value="1"/>
</dbReference>
<dbReference type="CDD" id="cd10411">
    <property type="entry name" value="SH2_SH2B2"/>
    <property type="match status" value="1"/>
</dbReference>
<dbReference type="FunFam" id="3.30.505.10:FF:000008">
    <property type="entry name" value="SH2B adapter protein 1 isoform 2"/>
    <property type="match status" value="1"/>
</dbReference>
<dbReference type="FunFam" id="2.30.29.30:FF:000187">
    <property type="entry name" value="SH2B adapter protein 2"/>
    <property type="match status" value="1"/>
</dbReference>
<dbReference type="Gene3D" id="6.10.140.110">
    <property type="match status" value="1"/>
</dbReference>
<dbReference type="Gene3D" id="2.30.29.30">
    <property type="entry name" value="Pleckstrin-homology domain (PH domain)/Phosphotyrosine-binding domain (PTB)"/>
    <property type="match status" value="1"/>
</dbReference>
<dbReference type="Gene3D" id="3.30.505.10">
    <property type="entry name" value="SH2 domain"/>
    <property type="match status" value="1"/>
</dbReference>
<dbReference type="InterPro" id="IPR011993">
    <property type="entry name" value="PH-like_dom_sf"/>
</dbReference>
<dbReference type="InterPro" id="IPR001849">
    <property type="entry name" value="PH_domain"/>
</dbReference>
<dbReference type="InterPro" id="IPR015012">
    <property type="entry name" value="Phe_ZIP"/>
</dbReference>
<dbReference type="InterPro" id="IPR036290">
    <property type="entry name" value="Phe_ZIP_sf"/>
</dbReference>
<dbReference type="InterPro" id="IPR000980">
    <property type="entry name" value="SH2"/>
</dbReference>
<dbReference type="InterPro" id="IPR036860">
    <property type="entry name" value="SH2_dom_sf"/>
</dbReference>
<dbReference type="InterPro" id="IPR030523">
    <property type="entry name" value="SH2B"/>
</dbReference>
<dbReference type="InterPro" id="IPR035058">
    <property type="entry name" value="SH2B2_SH2"/>
</dbReference>
<dbReference type="PANTHER" id="PTHR10872">
    <property type="entry name" value="SH2B ADAPTER PROTEIN"/>
    <property type="match status" value="1"/>
</dbReference>
<dbReference type="PANTHER" id="PTHR10872:SF4">
    <property type="entry name" value="SH2B ADAPTER PROTEIN 2"/>
    <property type="match status" value="1"/>
</dbReference>
<dbReference type="Pfam" id="PF00169">
    <property type="entry name" value="PH"/>
    <property type="match status" value="1"/>
</dbReference>
<dbReference type="Pfam" id="PF08916">
    <property type="entry name" value="Phe_ZIP"/>
    <property type="match status" value="1"/>
</dbReference>
<dbReference type="Pfam" id="PF00017">
    <property type="entry name" value="SH2"/>
    <property type="match status" value="1"/>
</dbReference>
<dbReference type="PRINTS" id="PR00401">
    <property type="entry name" value="SH2DOMAIN"/>
</dbReference>
<dbReference type="SMART" id="SM00233">
    <property type="entry name" value="PH"/>
    <property type="match status" value="1"/>
</dbReference>
<dbReference type="SMART" id="SM00252">
    <property type="entry name" value="SH2"/>
    <property type="match status" value="1"/>
</dbReference>
<dbReference type="SUPFAM" id="SSF50729">
    <property type="entry name" value="PH domain-like"/>
    <property type="match status" value="1"/>
</dbReference>
<dbReference type="SUPFAM" id="SSF109805">
    <property type="entry name" value="Phenylalanine zipper"/>
    <property type="match status" value="1"/>
</dbReference>
<dbReference type="SUPFAM" id="SSF55550">
    <property type="entry name" value="SH2 domain"/>
    <property type="match status" value="1"/>
</dbReference>
<dbReference type="PROSITE" id="PS50003">
    <property type="entry name" value="PH_DOMAIN"/>
    <property type="match status" value="1"/>
</dbReference>
<dbReference type="PROSITE" id="PS50001">
    <property type="entry name" value="SH2"/>
    <property type="match status" value="1"/>
</dbReference>
<feature type="chain" id="PRO_0000064647" description="SH2B adapter protein 2">
    <location>
        <begin position="1"/>
        <end position="632"/>
    </location>
</feature>
<feature type="domain" description="PH" evidence="3 11">
    <location>
        <begin position="193"/>
        <end position="306"/>
    </location>
</feature>
<feature type="domain" description="SH2" evidence="4 11">
    <location>
        <begin position="417"/>
        <end position="515"/>
    </location>
</feature>
<feature type="region of interest" description="Disordered" evidence="5">
    <location>
        <begin position="381"/>
        <end position="409"/>
    </location>
</feature>
<feature type="region of interest" description="Disordered" evidence="5">
    <location>
        <begin position="516"/>
        <end position="537"/>
    </location>
</feature>
<feature type="region of interest" description="Disordered" evidence="5">
    <location>
        <begin position="558"/>
        <end position="632"/>
    </location>
</feature>
<feature type="compositionally biased region" description="Acidic residues" evidence="5">
    <location>
        <begin position="400"/>
        <end position="409"/>
    </location>
</feature>
<feature type="compositionally biased region" description="Pro residues" evidence="5">
    <location>
        <begin position="519"/>
        <end position="532"/>
    </location>
</feature>
<feature type="compositionally biased region" description="Low complexity" evidence="5">
    <location>
        <begin position="558"/>
        <end position="579"/>
    </location>
</feature>
<feature type="compositionally biased region" description="Low complexity" evidence="5">
    <location>
        <begin position="604"/>
        <end position="626"/>
    </location>
</feature>
<feature type="modified residue" description="Phosphotyrosine" evidence="2">
    <location>
        <position position="52"/>
    </location>
</feature>
<feature type="modified residue" description="Phosphoserine" evidence="2">
    <location>
        <position position="141"/>
    </location>
</feature>
<feature type="modified residue" description="Phosphoserine" evidence="2">
    <location>
        <position position="310"/>
    </location>
</feature>
<feature type="modified residue" description="Phosphotyrosine" evidence="9">
    <location>
        <position position="629"/>
    </location>
</feature>
<feature type="splice variant" id="VSP_059358" description="In isoform 2.">
    <original>M</original>
    <variation>MDPSYCPAHGFPSQDPLWPLSSQQWSSAHYSEPAAGGCDGTEAM</variation>
    <location>
        <position position="1"/>
    </location>
</feature>
<feature type="sequence conflict" description="In Ref. 1; BAA22514." evidence="11" ref="1">
    <original>P</original>
    <variation>S</variation>
    <location>
        <position position="111"/>
    </location>
</feature>
<feature type="helix" evidence="13">
    <location>
        <begin position="23"/>
        <end position="48"/>
    </location>
</feature>
<feature type="helix" evidence="13">
    <location>
        <begin position="50"/>
        <end position="52"/>
    </location>
</feature>
<feature type="helix" evidence="13">
    <location>
        <begin position="57"/>
        <end position="82"/>
    </location>
</feature>
<keyword id="KW-0002">3D-structure</keyword>
<keyword id="KW-0025">Alternative splicing</keyword>
<keyword id="KW-1003">Cell membrane</keyword>
<keyword id="KW-0963">Cytoplasm</keyword>
<keyword id="KW-0472">Membrane</keyword>
<keyword id="KW-0597">Phosphoprotein</keyword>
<keyword id="KW-1267">Proteomics identification</keyword>
<keyword id="KW-1185">Reference proteome</keyword>
<keyword id="KW-0727">SH2 domain</keyword>
<organism evidence="12">
    <name type="scientific">Homo sapiens</name>
    <name type="common">Human</name>
    <dbReference type="NCBI Taxonomy" id="9606"/>
    <lineage>
        <taxon>Eukaryota</taxon>
        <taxon>Metazoa</taxon>
        <taxon>Chordata</taxon>
        <taxon>Craniata</taxon>
        <taxon>Vertebrata</taxon>
        <taxon>Euteleostomi</taxon>
        <taxon>Mammalia</taxon>
        <taxon>Eutheria</taxon>
        <taxon>Euarchontoglires</taxon>
        <taxon>Primates</taxon>
        <taxon>Haplorrhini</taxon>
        <taxon>Catarrhini</taxon>
        <taxon>Hominidae</taxon>
        <taxon>Homo</taxon>
    </lineage>
</organism>
<accession>O14492</accession>
<accession>A0A0A0MTI2</accession>
<accession>A6ND74</accession>
<reference evidence="11" key="1">
    <citation type="journal article" date="1997" name="Oncogene">
        <title>Cloning and characterization of APS, an adaptor molecule containing PH and SH2 domains that is tyrosine phosphorylated upon B-cell receptor stimulation.</title>
        <authorList>
            <person name="Yokouchi M."/>
            <person name="Suzuki R."/>
            <person name="Masuhara M."/>
            <person name="Komiya S."/>
            <person name="Inoue A."/>
            <person name="Yoshimura A."/>
        </authorList>
    </citation>
    <scope>NUCLEOTIDE SEQUENCE [MRNA]</scope>
    <scope>TISSUE SPECIFICITY</scope>
    <scope>INTERACTION WITH GRB2; KIT AND SHC1</scope>
    <scope>PHOSPHORYLATION AT TYR-629</scope>
    <source>
        <tissue evidence="9">B-cell</tissue>
    </source>
</reference>
<reference key="2">
    <citation type="journal article" date="2003" name="Nature">
        <title>The DNA sequence of human chromosome 7.</title>
        <authorList>
            <person name="Hillier L.W."/>
            <person name="Fulton R.S."/>
            <person name="Fulton L.A."/>
            <person name="Graves T.A."/>
            <person name="Pepin K.H."/>
            <person name="Wagner-McPherson C."/>
            <person name="Layman D."/>
            <person name="Maas J."/>
            <person name="Jaeger S."/>
            <person name="Walker R."/>
            <person name="Wylie K."/>
            <person name="Sekhon M."/>
            <person name="Becker M.C."/>
            <person name="O'Laughlin M.D."/>
            <person name="Schaller M.E."/>
            <person name="Fewell G.A."/>
            <person name="Delehaunty K.D."/>
            <person name="Miner T.L."/>
            <person name="Nash W.E."/>
            <person name="Cordes M."/>
            <person name="Du H."/>
            <person name="Sun H."/>
            <person name="Edwards J."/>
            <person name="Bradshaw-Cordum H."/>
            <person name="Ali J."/>
            <person name="Andrews S."/>
            <person name="Isak A."/>
            <person name="Vanbrunt A."/>
            <person name="Nguyen C."/>
            <person name="Du F."/>
            <person name="Lamar B."/>
            <person name="Courtney L."/>
            <person name="Kalicki J."/>
            <person name="Ozersky P."/>
            <person name="Bielicki L."/>
            <person name="Scott K."/>
            <person name="Holmes A."/>
            <person name="Harkins R."/>
            <person name="Harris A."/>
            <person name="Strong C.M."/>
            <person name="Hou S."/>
            <person name="Tomlinson C."/>
            <person name="Dauphin-Kohlberg S."/>
            <person name="Kozlowicz-Reilly A."/>
            <person name="Leonard S."/>
            <person name="Rohlfing T."/>
            <person name="Rock S.M."/>
            <person name="Tin-Wollam A.-M."/>
            <person name="Abbott A."/>
            <person name="Minx P."/>
            <person name="Maupin R."/>
            <person name="Strowmatt C."/>
            <person name="Latreille P."/>
            <person name="Miller N."/>
            <person name="Johnson D."/>
            <person name="Murray J."/>
            <person name="Woessner J.P."/>
            <person name="Wendl M.C."/>
            <person name="Yang S.-P."/>
            <person name="Schultz B.R."/>
            <person name="Wallis J.W."/>
            <person name="Spieth J."/>
            <person name="Bieri T.A."/>
            <person name="Nelson J.O."/>
            <person name="Berkowicz N."/>
            <person name="Wohldmann P.E."/>
            <person name="Cook L.L."/>
            <person name="Hickenbotham M.T."/>
            <person name="Eldred J."/>
            <person name="Williams D."/>
            <person name="Bedell J.A."/>
            <person name="Mardis E.R."/>
            <person name="Clifton S.W."/>
            <person name="Chissoe S.L."/>
            <person name="Marra M.A."/>
            <person name="Raymond C."/>
            <person name="Haugen E."/>
            <person name="Gillett W."/>
            <person name="Zhou Y."/>
            <person name="James R."/>
            <person name="Phelps K."/>
            <person name="Iadanoto S."/>
            <person name="Bubb K."/>
            <person name="Simms E."/>
            <person name="Levy R."/>
            <person name="Clendenning J."/>
            <person name="Kaul R."/>
            <person name="Kent W.J."/>
            <person name="Furey T.S."/>
            <person name="Baertsch R.A."/>
            <person name="Brent M.R."/>
            <person name="Keibler E."/>
            <person name="Flicek P."/>
            <person name="Bork P."/>
            <person name="Suyama M."/>
            <person name="Bailey J.A."/>
            <person name="Portnoy M.E."/>
            <person name="Torrents D."/>
            <person name="Chinwalla A.T."/>
            <person name="Gish W.R."/>
            <person name="Eddy S.R."/>
            <person name="McPherson J.D."/>
            <person name="Olson M.V."/>
            <person name="Eichler E.E."/>
            <person name="Green E.D."/>
            <person name="Waterston R.H."/>
            <person name="Wilson R.K."/>
        </authorList>
    </citation>
    <scope>NUCLEOTIDE SEQUENCE [LARGE SCALE GENOMIC DNA]</scope>
</reference>
<reference key="3">
    <citation type="submission" date="2005-07" db="EMBL/GenBank/DDBJ databases">
        <authorList>
            <person name="Mural R.J."/>
            <person name="Istrail S."/>
            <person name="Sutton G."/>
            <person name="Florea L."/>
            <person name="Halpern A.L."/>
            <person name="Mobarry C.M."/>
            <person name="Lippert R."/>
            <person name="Walenz B."/>
            <person name="Shatkay H."/>
            <person name="Dew I."/>
            <person name="Miller J.R."/>
            <person name="Flanigan M.J."/>
            <person name="Edwards N.J."/>
            <person name="Bolanos R."/>
            <person name="Fasulo D."/>
            <person name="Halldorsson B.V."/>
            <person name="Hannenhalli S."/>
            <person name="Turner R."/>
            <person name="Yooseph S."/>
            <person name="Lu F."/>
            <person name="Nusskern D.R."/>
            <person name="Shue B.C."/>
            <person name="Zheng X.H."/>
            <person name="Zhong F."/>
            <person name="Delcher A.L."/>
            <person name="Huson D.H."/>
            <person name="Kravitz S.A."/>
            <person name="Mouchard L."/>
            <person name="Reinert K."/>
            <person name="Remington K.A."/>
            <person name="Clark A.G."/>
            <person name="Waterman M.S."/>
            <person name="Eichler E.E."/>
            <person name="Adams M.D."/>
            <person name="Hunkapiller M.W."/>
            <person name="Myers E.W."/>
            <person name="Venter J.C."/>
        </authorList>
    </citation>
    <scope>NUCLEOTIDE SEQUENCE [LARGE SCALE GENOMIC DNA]</scope>
</reference>
<reference evidence="11" key="4">
    <citation type="journal article" date="1999" name="Leukemia">
        <title>APS, an adaptor protein containing pleckstrin homology (PH) and Src homology-2 (SH2) domains inhibits the JAK-STAT pathway in collaboration with c-Cbl.</title>
        <authorList>
            <person name="Wakioka T."/>
            <person name="Sasaki A."/>
            <person name="Mitsui K."/>
            <person name="Yokouchi M."/>
            <person name="Inoue A."/>
            <person name="Komiya S."/>
            <person name="Yoshimura A."/>
        </authorList>
    </citation>
    <scope>FUNCTION</scope>
    <scope>PHOSPHORYLATION</scope>
    <scope>INTERACTION WITH CBL AND EPOR</scope>
</reference>
<reference evidence="11" key="5">
    <citation type="journal article" date="1999" name="Oncogene">
        <title>APS, an adaptor protein containing PH and SH2 domains, is associated with the PDGF receptor and c-Cbl and inhibits PDGF-induced mitogenesis.</title>
        <authorList>
            <person name="Yokouchi M."/>
            <person name="Wakioka T."/>
            <person name="Sakamoto H."/>
            <person name="Yasukawa H."/>
            <person name="Ohtsuka S."/>
            <person name="Sasaki A."/>
            <person name="Ohtsubo M."/>
            <person name="Valius M."/>
            <person name="Inoue A."/>
            <person name="Komiya S."/>
            <person name="Yoshimura A."/>
        </authorList>
    </citation>
    <scope>FUNCTION</scope>
    <scope>PHOSPHORYLATION</scope>
    <scope>INTERACTION WITH CBL AND PDGFR</scope>
    <scope>SUBCELLULAR LOCATION</scope>
    <scope>TISSUE SPECIFICITY</scope>
</reference>
<reference evidence="11" key="6">
    <citation type="journal article" date="2002" name="Oncogene">
        <title>Adaptor protein APS binds the NH2-terminal autoinhibitory domain of guanine nucleotide exchange factor Vav3 and augments its activity.</title>
        <authorList>
            <person name="Yabana N."/>
            <person name="Shibuya M."/>
        </authorList>
    </citation>
    <scope>FUNCTION</scope>
    <scope>INTERACTION WITH VAV1 AND VAV3</scope>
</reference>
<reference key="7">
    <citation type="journal article" date="2005" name="Biochem. Biophys. Res. Commun.">
        <title>Signaling by Kit protein-tyrosine kinase--the stem cell factor receptor.</title>
        <authorList>
            <person name="Roskoski R. Jr."/>
        </authorList>
    </citation>
    <scope>REVIEW ON ROLE IN KIT SIGNALING</scope>
</reference>
<reference key="8">
    <citation type="journal article" date="2004" name="Nat. Struct. Mol. Biol.">
        <title>A phenylalanine zipper mediates APS dimerization.</title>
        <authorList>
            <person name="Dhe-Paganon S."/>
            <person name="Werner E.D."/>
            <person name="Nishi M."/>
            <person name="Hansen L."/>
            <person name="Chi Y.-I."/>
            <person name="Shoelson S.E."/>
        </authorList>
    </citation>
    <scope>X-RAY CRYSTALLOGRAPHY (1.7 ANGSTROMS) OF 21-85</scope>
    <scope>FUNCTION</scope>
    <scope>SUBUNIT</scope>
</reference>
<name>SH2B2_HUMAN</name>